<proteinExistence type="inferred from homology"/>
<reference key="1">
    <citation type="journal article" date="2011" name="Proc. Natl. Acad. Sci. U.S.A.">
        <title>Genomic anatomy of Escherichia coli O157:H7 outbreaks.</title>
        <authorList>
            <person name="Eppinger M."/>
            <person name="Mammel M.K."/>
            <person name="Leclerc J.E."/>
            <person name="Ravel J."/>
            <person name="Cebula T.A."/>
        </authorList>
    </citation>
    <scope>NUCLEOTIDE SEQUENCE [LARGE SCALE GENOMIC DNA]</scope>
    <source>
        <strain>EC4115 / EHEC</strain>
    </source>
</reference>
<accession>B5YRA4</accession>
<dbReference type="EC" id="2.3.1.234" evidence="1"/>
<dbReference type="EMBL" id="CP001164">
    <property type="protein sequence ID" value="ACI39560.1"/>
    <property type="molecule type" value="Genomic_DNA"/>
</dbReference>
<dbReference type="RefSeq" id="WP_001264365.1">
    <property type="nucleotide sequence ID" value="NC_011353.1"/>
</dbReference>
<dbReference type="SMR" id="B5YRA4"/>
<dbReference type="GeneID" id="93778929"/>
<dbReference type="KEGG" id="ecf:ECH74115_4376"/>
<dbReference type="HOGENOM" id="CLU_023208_0_2_6"/>
<dbReference type="GO" id="GO:0005737">
    <property type="term" value="C:cytoplasm"/>
    <property type="evidence" value="ECO:0007669"/>
    <property type="project" value="UniProtKB-SubCell"/>
</dbReference>
<dbReference type="GO" id="GO:0005506">
    <property type="term" value="F:iron ion binding"/>
    <property type="evidence" value="ECO:0007669"/>
    <property type="project" value="UniProtKB-UniRule"/>
</dbReference>
<dbReference type="GO" id="GO:0061711">
    <property type="term" value="F:N(6)-L-threonylcarbamoyladenine synthase activity"/>
    <property type="evidence" value="ECO:0007669"/>
    <property type="project" value="UniProtKB-EC"/>
</dbReference>
<dbReference type="GO" id="GO:0002949">
    <property type="term" value="P:tRNA threonylcarbamoyladenosine modification"/>
    <property type="evidence" value="ECO:0007669"/>
    <property type="project" value="UniProtKB-UniRule"/>
</dbReference>
<dbReference type="CDD" id="cd24097">
    <property type="entry name" value="ASKHA_NBD_TsaD-like"/>
    <property type="match status" value="1"/>
</dbReference>
<dbReference type="FunFam" id="3.30.420.40:FF:000031">
    <property type="entry name" value="tRNA N6-adenosine threonylcarbamoyltransferase"/>
    <property type="match status" value="1"/>
</dbReference>
<dbReference type="Gene3D" id="3.30.420.40">
    <property type="match status" value="2"/>
</dbReference>
<dbReference type="HAMAP" id="MF_01445">
    <property type="entry name" value="TsaD"/>
    <property type="match status" value="1"/>
</dbReference>
<dbReference type="InterPro" id="IPR043129">
    <property type="entry name" value="ATPase_NBD"/>
</dbReference>
<dbReference type="InterPro" id="IPR000905">
    <property type="entry name" value="Gcp-like_dom"/>
</dbReference>
<dbReference type="InterPro" id="IPR017861">
    <property type="entry name" value="KAE1/TsaD"/>
</dbReference>
<dbReference type="InterPro" id="IPR017860">
    <property type="entry name" value="Peptidase_M22_CS"/>
</dbReference>
<dbReference type="InterPro" id="IPR022450">
    <property type="entry name" value="TsaD"/>
</dbReference>
<dbReference type="NCBIfam" id="TIGR00329">
    <property type="entry name" value="gcp_kae1"/>
    <property type="match status" value="1"/>
</dbReference>
<dbReference type="NCBIfam" id="TIGR03723">
    <property type="entry name" value="T6A_TsaD_YgjD"/>
    <property type="match status" value="1"/>
</dbReference>
<dbReference type="PANTHER" id="PTHR11735">
    <property type="entry name" value="TRNA N6-ADENOSINE THREONYLCARBAMOYLTRANSFERASE"/>
    <property type="match status" value="1"/>
</dbReference>
<dbReference type="PANTHER" id="PTHR11735:SF6">
    <property type="entry name" value="TRNA N6-ADENOSINE THREONYLCARBAMOYLTRANSFERASE, MITOCHONDRIAL"/>
    <property type="match status" value="1"/>
</dbReference>
<dbReference type="Pfam" id="PF00814">
    <property type="entry name" value="TsaD"/>
    <property type="match status" value="1"/>
</dbReference>
<dbReference type="PRINTS" id="PR00789">
    <property type="entry name" value="OSIALOPTASE"/>
</dbReference>
<dbReference type="SUPFAM" id="SSF53067">
    <property type="entry name" value="Actin-like ATPase domain"/>
    <property type="match status" value="1"/>
</dbReference>
<dbReference type="PROSITE" id="PS01016">
    <property type="entry name" value="GLYCOPROTEASE"/>
    <property type="match status" value="1"/>
</dbReference>
<protein>
    <recommendedName>
        <fullName evidence="1">tRNA N6-adenosine threonylcarbamoyltransferase</fullName>
        <ecNumber evidence="1">2.3.1.234</ecNumber>
    </recommendedName>
    <alternativeName>
        <fullName evidence="1">N6-L-threonylcarbamoyladenine synthase</fullName>
        <shortName evidence="1">t(6)A synthase</shortName>
    </alternativeName>
    <alternativeName>
        <fullName evidence="1">t(6)A37 threonylcarbamoyladenosine biosynthesis protein TsaD</fullName>
    </alternativeName>
    <alternativeName>
        <fullName evidence="1">tRNA threonylcarbamoyladenosine biosynthesis protein TsaD</fullName>
    </alternativeName>
</protein>
<evidence type="ECO:0000255" key="1">
    <source>
        <dbReference type="HAMAP-Rule" id="MF_01445"/>
    </source>
</evidence>
<comment type="function">
    <text evidence="1">Required for the formation of a threonylcarbamoyl group on adenosine at position 37 (t(6)A37) in tRNAs that read codons beginning with adenine. Is involved in the transfer of the threonylcarbamoyl moiety of threonylcarbamoyl-AMP (TC-AMP) to the N6 group of A37, together with TsaE and TsaB. TsaD likely plays a direct catalytic role in this reaction.</text>
</comment>
<comment type="catalytic activity">
    <reaction evidence="1">
        <text>L-threonylcarbamoyladenylate + adenosine(37) in tRNA = N(6)-L-threonylcarbamoyladenosine(37) in tRNA + AMP + H(+)</text>
        <dbReference type="Rhea" id="RHEA:37059"/>
        <dbReference type="Rhea" id="RHEA-COMP:10162"/>
        <dbReference type="Rhea" id="RHEA-COMP:10163"/>
        <dbReference type="ChEBI" id="CHEBI:15378"/>
        <dbReference type="ChEBI" id="CHEBI:73682"/>
        <dbReference type="ChEBI" id="CHEBI:74411"/>
        <dbReference type="ChEBI" id="CHEBI:74418"/>
        <dbReference type="ChEBI" id="CHEBI:456215"/>
        <dbReference type="EC" id="2.3.1.234"/>
    </reaction>
</comment>
<comment type="cofactor">
    <cofactor evidence="1">
        <name>Fe(2+)</name>
        <dbReference type="ChEBI" id="CHEBI:29033"/>
    </cofactor>
    <text evidence="1">Binds 1 Fe(2+) ion per subunit.</text>
</comment>
<comment type="subcellular location">
    <subcellularLocation>
        <location evidence="1">Cytoplasm</location>
    </subcellularLocation>
</comment>
<comment type="similarity">
    <text evidence="1">Belongs to the KAE1 / TsaD family.</text>
</comment>
<gene>
    <name evidence="1" type="primary">tsaD</name>
    <name type="synonym">gcp</name>
    <name type="ordered locus">ECH74115_4376</name>
</gene>
<organism>
    <name type="scientific">Escherichia coli O157:H7 (strain EC4115 / EHEC)</name>
    <dbReference type="NCBI Taxonomy" id="444450"/>
    <lineage>
        <taxon>Bacteria</taxon>
        <taxon>Pseudomonadati</taxon>
        <taxon>Pseudomonadota</taxon>
        <taxon>Gammaproteobacteria</taxon>
        <taxon>Enterobacterales</taxon>
        <taxon>Enterobacteriaceae</taxon>
        <taxon>Escherichia</taxon>
    </lineage>
</organism>
<sequence length="337" mass="36007">MRVLGIETSCDETGIAIYDDEKGLLANQLYSQVKLHADYGGVVPELASRDHVRKTVPLIQAALKESGLTAKDIDAVAYTAGPGLVGALLVGATVGRSLAFAWNVPAIPVHHMEGHLLAPMLEDNPPEFPFVALLVSGGHTQLISVTGIGQYELLGESIDDAAGEAFDKTAKLLGLDYPGGPLLSKMAAQGTAGRFVFPRPMTDRPGLDFSFSGLKTFAANTIRDNGTDDQTRADIARAFEDAVVDTLMIKCKRALDQTGFKRLVMAGGVSANRTLRAKLAEMMKKRRGEVFYARPEFCTDNGAMIAYAGMVRFKAGATADLGVSVRPRWPLAELPAA</sequence>
<name>TSAD_ECO5E</name>
<feature type="chain" id="PRO_1000145975" description="tRNA N6-adenosine threonylcarbamoyltransferase">
    <location>
        <begin position="1"/>
        <end position="337"/>
    </location>
</feature>
<feature type="binding site" evidence="1">
    <location>
        <position position="111"/>
    </location>
    <ligand>
        <name>Fe cation</name>
        <dbReference type="ChEBI" id="CHEBI:24875"/>
    </ligand>
</feature>
<feature type="binding site" evidence="1">
    <location>
        <position position="115"/>
    </location>
    <ligand>
        <name>Fe cation</name>
        <dbReference type="ChEBI" id="CHEBI:24875"/>
    </ligand>
</feature>
<feature type="binding site" evidence="1">
    <location>
        <begin position="134"/>
        <end position="138"/>
    </location>
    <ligand>
        <name>substrate</name>
    </ligand>
</feature>
<feature type="binding site" evidence="1">
    <location>
        <position position="167"/>
    </location>
    <ligand>
        <name>substrate</name>
    </ligand>
</feature>
<feature type="binding site" evidence="1">
    <location>
        <position position="180"/>
    </location>
    <ligand>
        <name>substrate</name>
    </ligand>
</feature>
<feature type="binding site" evidence="1">
    <location>
        <position position="272"/>
    </location>
    <ligand>
        <name>substrate</name>
    </ligand>
</feature>
<feature type="binding site" evidence="1">
    <location>
        <position position="300"/>
    </location>
    <ligand>
        <name>Fe cation</name>
        <dbReference type="ChEBI" id="CHEBI:24875"/>
    </ligand>
</feature>
<keyword id="KW-0012">Acyltransferase</keyword>
<keyword id="KW-0963">Cytoplasm</keyword>
<keyword id="KW-0408">Iron</keyword>
<keyword id="KW-0479">Metal-binding</keyword>
<keyword id="KW-0808">Transferase</keyword>
<keyword id="KW-0819">tRNA processing</keyword>